<organism>
    <name type="scientific">Helicobacter pylori (strain HPAG1)</name>
    <dbReference type="NCBI Taxonomy" id="357544"/>
    <lineage>
        <taxon>Bacteria</taxon>
        <taxon>Pseudomonadati</taxon>
        <taxon>Campylobacterota</taxon>
        <taxon>Epsilonproteobacteria</taxon>
        <taxon>Campylobacterales</taxon>
        <taxon>Helicobacteraceae</taxon>
        <taxon>Helicobacter</taxon>
    </lineage>
</organism>
<name>RL11_HELPH</name>
<sequence length="141" mass="15329">MAKKVVGEIKLQIPAGKANPSPPVGPALGQRGVNIMEFCKAFNERTKDMGSFNIPVIITVYQDKSFTFITKKPPVTDLIKKASGVEKGSDNPLKNKIAKLTHKQVEEIAQLKMEDLNTSTMEAAKKIVMGSARSMGVEVVD</sequence>
<proteinExistence type="inferred from homology"/>
<accession>Q1CS64</accession>
<feature type="chain" id="PRO_0000258161" description="Large ribosomal subunit protein uL11">
    <location>
        <begin position="1"/>
        <end position="141"/>
    </location>
</feature>
<evidence type="ECO:0000255" key="1">
    <source>
        <dbReference type="HAMAP-Rule" id="MF_00736"/>
    </source>
</evidence>
<evidence type="ECO:0000305" key="2"/>
<comment type="function">
    <text evidence="1">Forms part of the ribosomal stalk which helps the ribosome interact with GTP-bound translation factors.</text>
</comment>
<comment type="subunit">
    <text evidence="1">Part of the ribosomal stalk of the 50S ribosomal subunit. Interacts with L10 and the large rRNA to form the base of the stalk. L10 forms an elongated spine to which L12 dimers bind in a sequential fashion forming a multimeric L10(L12)X complex.</text>
</comment>
<comment type="PTM">
    <text evidence="1">One or more lysine residues are methylated.</text>
</comment>
<comment type="similarity">
    <text evidence="1">Belongs to the universal ribosomal protein uL11 family.</text>
</comment>
<dbReference type="EMBL" id="CP000241">
    <property type="protein sequence ID" value="ABF85208.1"/>
    <property type="molecule type" value="Genomic_DNA"/>
</dbReference>
<dbReference type="RefSeq" id="WP_001085997.1">
    <property type="nucleotide sequence ID" value="NC_008086.1"/>
</dbReference>
<dbReference type="SMR" id="Q1CS64"/>
<dbReference type="GeneID" id="93237670"/>
<dbReference type="KEGG" id="hpa:HPAG1_1141"/>
<dbReference type="HOGENOM" id="CLU_074237_2_0_7"/>
<dbReference type="GO" id="GO:0022625">
    <property type="term" value="C:cytosolic large ribosomal subunit"/>
    <property type="evidence" value="ECO:0007669"/>
    <property type="project" value="TreeGrafter"/>
</dbReference>
<dbReference type="GO" id="GO:0070180">
    <property type="term" value="F:large ribosomal subunit rRNA binding"/>
    <property type="evidence" value="ECO:0007669"/>
    <property type="project" value="UniProtKB-UniRule"/>
</dbReference>
<dbReference type="GO" id="GO:0003735">
    <property type="term" value="F:structural constituent of ribosome"/>
    <property type="evidence" value="ECO:0007669"/>
    <property type="project" value="InterPro"/>
</dbReference>
<dbReference type="GO" id="GO:0006412">
    <property type="term" value="P:translation"/>
    <property type="evidence" value="ECO:0007669"/>
    <property type="project" value="UniProtKB-UniRule"/>
</dbReference>
<dbReference type="CDD" id="cd00349">
    <property type="entry name" value="Ribosomal_L11"/>
    <property type="match status" value="1"/>
</dbReference>
<dbReference type="FunFam" id="1.10.10.250:FF:000001">
    <property type="entry name" value="50S ribosomal protein L11"/>
    <property type="match status" value="1"/>
</dbReference>
<dbReference type="FunFam" id="3.30.1550.10:FF:000001">
    <property type="entry name" value="50S ribosomal protein L11"/>
    <property type="match status" value="1"/>
</dbReference>
<dbReference type="Gene3D" id="1.10.10.250">
    <property type="entry name" value="Ribosomal protein L11, C-terminal domain"/>
    <property type="match status" value="1"/>
</dbReference>
<dbReference type="Gene3D" id="3.30.1550.10">
    <property type="entry name" value="Ribosomal protein L11/L12, N-terminal domain"/>
    <property type="match status" value="1"/>
</dbReference>
<dbReference type="HAMAP" id="MF_00736">
    <property type="entry name" value="Ribosomal_uL11"/>
    <property type="match status" value="1"/>
</dbReference>
<dbReference type="InterPro" id="IPR000911">
    <property type="entry name" value="Ribosomal_uL11"/>
</dbReference>
<dbReference type="InterPro" id="IPR006519">
    <property type="entry name" value="Ribosomal_uL11_bac-typ"/>
</dbReference>
<dbReference type="InterPro" id="IPR020783">
    <property type="entry name" value="Ribosomal_uL11_C"/>
</dbReference>
<dbReference type="InterPro" id="IPR036769">
    <property type="entry name" value="Ribosomal_uL11_C_sf"/>
</dbReference>
<dbReference type="InterPro" id="IPR020785">
    <property type="entry name" value="Ribosomal_uL11_CS"/>
</dbReference>
<dbReference type="InterPro" id="IPR020784">
    <property type="entry name" value="Ribosomal_uL11_N"/>
</dbReference>
<dbReference type="InterPro" id="IPR036796">
    <property type="entry name" value="Ribosomal_uL11_N_sf"/>
</dbReference>
<dbReference type="NCBIfam" id="TIGR01632">
    <property type="entry name" value="L11_bact"/>
    <property type="match status" value="1"/>
</dbReference>
<dbReference type="PANTHER" id="PTHR11661">
    <property type="entry name" value="60S RIBOSOMAL PROTEIN L12"/>
    <property type="match status" value="1"/>
</dbReference>
<dbReference type="PANTHER" id="PTHR11661:SF1">
    <property type="entry name" value="LARGE RIBOSOMAL SUBUNIT PROTEIN UL11M"/>
    <property type="match status" value="1"/>
</dbReference>
<dbReference type="Pfam" id="PF00298">
    <property type="entry name" value="Ribosomal_L11"/>
    <property type="match status" value="1"/>
</dbReference>
<dbReference type="Pfam" id="PF03946">
    <property type="entry name" value="Ribosomal_L11_N"/>
    <property type="match status" value="1"/>
</dbReference>
<dbReference type="SMART" id="SM00649">
    <property type="entry name" value="RL11"/>
    <property type="match status" value="1"/>
</dbReference>
<dbReference type="SUPFAM" id="SSF54747">
    <property type="entry name" value="Ribosomal L11/L12e N-terminal domain"/>
    <property type="match status" value="1"/>
</dbReference>
<dbReference type="SUPFAM" id="SSF46906">
    <property type="entry name" value="Ribosomal protein L11, C-terminal domain"/>
    <property type="match status" value="1"/>
</dbReference>
<dbReference type="PROSITE" id="PS00359">
    <property type="entry name" value="RIBOSOMAL_L11"/>
    <property type="match status" value="1"/>
</dbReference>
<gene>
    <name evidence="1" type="primary">rplK</name>
    <name type="ordered locus">HPAG1_1141</name>
</gene>
<protein>
    <recommendedName>
        <fullName evidence="1">Large ribosomal subunit protein uL11</fullName>
    </recommendedName>
    <alternativeName>
        <fullName evidence="2">50S ribosomal protein L11</fullName>
    </alternativeName>
</protein>
<reference key="1">
    <citation type="journal article" date="2006" name="Proc. Natl. Acad. Sci. U.S.A.">
        <title>The complete genome sequence of a chronic atrophic gastritis Helicobacter pylori strain: evolution during disease progression.</title>
        <authorList>
            <person name="Oh J.D."/>
            <person name="Kling-Baeckhed H."/>
            <person name="Giannakis M."/>
            <person name="Xu J."/>
            <person name="Fulton R.S."/>
            <person name="Fulton L.A."/>
            <person name="Cordum H.S."/>
            <person name="Wang C."/>
            <person name="Elliott G."/>
            <person name="Edwards J."/>
            <person name="Mardis E.R."/>
            <person name="Engstrand L.G."/>
            <person name="Gordon J.I."/>
        </authorList>
    </citation>
    <scope>NUCLEOTIDE SEQUENCE [LARGE SCALE GENOMIC DNA]</scope>
    <source>
        <strain>HPAG1</strain>
    </source>
</reference>
<keyword id="KW-0488">Methylation</keyword>
<keyword id="KW-0687">Ribonucleoprotein</keyword>
<keyword id="KW-0689">Ribosomal protein</keyword>
<keyword id="KW-0694">RNA-binding</keyword>
<keyword id="KW-0699">rRNA-binding</keyword>